<proteinExistence type="inferred from homology"/>
<organism>
    <name type="scientific">Clostridium botulinum (strain ATCC 19397 / Type A)</name>
    <dbReference type="NCBI Taxonomy" id="441770"/>
    <lineage>
        <taxon>Bacteria</taxon>
        <taxon>Bacillati</taxon>
        <taxon>Bacillota</taxon>
        <taxon>Clostridia</taxon>
        <taxon>Eubacteriales</taxon>
        <taxon>Clostridiaceae</taxon>
        <taxon>Clostridium</taxon>
    </lineage>
</organism>
<protein>
    <recommendedName>
        <fullName evidence="1">Small, acid-soluble spore protein H 1</fullName>
        <shortName evidence="1">SASP H 1</shortName>
    </recommendedName>
</protein>
<accession>A7FS46</accession>
<evidence type="ECO:0000255" key="1">
    <source>
        <dbReference type="HAMAP-Rule" id="MF_00667"/>
    </source>
</evidence>
<sequence length="62" mass="6858">MDASRASQLINSRETDVYCKSEPVIIRSVDEYSKMATVESLNNGTTIMAPLNDIRDSGVINH</sequence>
<keyword id="KW-0749">Sporulation</keyword>
<name>SSPH1_CLOB1</name>
<gene>
    <name evidence="1" type="primary">sspH1</name>
    <name type="ordered locus">CLB_0831</name>
</gene>
<feature type="chain" id="PRO_0000329126" description="Small, acid-soluble spore protein H 1">
    <location>
        <begin position="1"/>
        <end position="62"/>
    </location>
</feature>
<comment type="subcellular location">
    <subcellularLocation>
        <location evidence="1">Spore core</location>
    </subcellularLocation>
</comment>
<comment type="similarity">
    <text evidence="1">Belongs to the SspH family.</text>
</comment>
<reference key="1">
    <citation type="journal article" date="2007" name="PLoS ONE">
        <title>Analysis of the neurotoxin complex genes in Clostridium botulinum A1-A4 and B1 strains: BoNT/A3, /Ba4 and /B1 clusters are located within plasmids.</title>
        <authorList>
            <person name="Smith T.J."/>
            <person name="Hill K.K."/>
            <person name="Foley B.T."/>
            <person name="Detter J.C."/>
            <person name="Munk A.C."/>
            <person name="Bruce D.C."/>
            <person name="Doggett N.A."/>
            <person name="Smith L.A."/>
            <person name="Marks J.D."/>
            <person name="Xie G."/>
            <person name="Brettin T.S."/>
        </authorList>
    </citation>
    <scope>NUCLEOTIDE SEQUENCE [LARGE SCALE GENOMIC DNA]</scope>
    <source>
        <strain>ATCC 19397 / Type A</strain>
    </source>
</reference>
<dbReference type="EMBL" id="CP000726">
    <property type="protein sequence ID" value="ABS34138.1"/>
    <property type="molecule type" value="Genomic_DNA"/>
</dbReference>
<dbReference type="RefSeq" id="WP_011948497.1">
    <property type="nucleotide sequence ID" value="NC_009697.1"/>
</dbReference>
<dbReference type="KEGG" id="cba:CLB_0831"/>
<dbReference type="HOGENOM" id="CLU_2895957_0_0_9"/>
<dbReference type="GO" id="GO:0042601">
    <property type="term" value="C:endospore-forming forespore"/>
    <property type="evidence" value="ECO:0007669"/>
    <property type="project" value="InterPro"/>
</dbReference>
<dbReference type="GO" id="GO:0030436">
    <property type="term" value="P:asexual sporulation"/>
    <property type="evidence" value="ECO:0007669"/>
    <property type="project" value="UniProtKB-UniRule"/>
</dbReference>
<dbReference type="GO" id="GO:0030435">
    <property type="term" value="P:sporulation resulting in formation of a cellular spore"/>
    <property type="evidence" value="ECO:0007669"/>
    <property type="project" value="UniProtKB-KW"/>
</dbReference>
<dbReference type="HAMAP" id="MF_00667">
    <property type="entry name" value="SspH"/>
    <property type="match status" value="1"/>
</dbReference>
<dbReference type="InterPro" id="IPR012610">
    <property type="entry name" value="SASP_SspH"/>
</dbReference>
<dbReference type="NCBIfam" id="TIGR02861">
    <property type="entry name" value="SASP_H"/>
    <property type="match status" value="1"/>
</dbReference>
<dbReference type="Pfam" id="PF08141">
    <property type="entry name" value="SspH"/>
    <property type="match status" value="1"/>
</dbReference>